<accession>B2T733</accession>
<comment type="subunit">
    <text evidence="1">Part of the 50S ribosomal subunit.</text>
</comment>
<comment type="similarity">
    <text evidence="1">Belongs to the universal ribosomal protein uL30 family.</text>
</comment>
<proteinExistence type="inferred from homology"/>
<name>RL30_PARPJ</name>
<dbReference type="EMBL" id="CP001052">
    <property type="protein sequence ID" value="ACD18016.1"/>
    <property type="molecule type" value="Genomic_DNA"/>
</dbReference>
<dbReference type="RefSeq" id="WP_007180126.1">
    <property type="nucleotide sequence ID" value="NC_010681.1"/>
</dbReference>
<dbReference type="SMR" id="B2T733"/>
<dbReference type="STRING" id="398527.Bphyt_3626"/>
<dbReference type="GeneID" id="97311010"/>
<dbReference type="KEGG" id="bpy:Bphyt_3626"/>
<dbReference type="eggNOG" id="COG1841">
    <property type="taxonomic scope" value="Bacteria"/>
</dbReference>
<dbReference type="HOGENOM" id="CLU_131047_1_4_4"/>
<dbReference type="OrthoDB" id="9812790at2"/>
<dbReference type="Proteomes" id="UP000001739">
    <property type="component" value="Chromosome 1"/>
</dbReference>
<dbReference type="GO" id="GO:0022625">
    <property type="term" value="C:cytosolic large ribosomal subunit"/>
    <property type="evidence" value="ECO:0007669"/>
    <property type="project" value="TreeGrafter"/>
</dbReference>
<dbReference type="GO" id="GO:0003735">
    <property type="term" value="F:structural constituent of ribosome"/>
    <property type="evidence" value="ECO:0007669"/>
    <property type="project" value="InterPro"/>
</dbReference>
<dbReference type="GO" id="GO:0006412">
    <property type="term" value="P:translation"/>
    <property type="evidence" value="ECO:0007669"/>
    <property type="project" value="UniProtKB-UniRule"/>
</dbReference>
<dbReference type="CDD" id="cd01658">
    <property type="entry name" value="Ribosomal_L30"/>
    <property type="match status" value="1"/>
</dbReference>
<dbReference type="FunFam" id="3.30.1390.20:FF:000001">
    <property type="entry name" value="50S ribosomal protein L30"/>
    <property type="match status" value="1"/>
</dbReference>
<dbReference type="Gene3D" id="3.30.1390.20">
    <property type="entry name" value="Ribosomal protein L30, ferredoxin-like fold domain"/>
    <property type="match status" value="1"/>
</dbReference>
<dbReference type="HAMAP" id="MF_01371_B">
    <property type="entry name" value="Ribosomal_uL30_B"/>
    <property type="match status" value="1"/>
</dbReference>
<dbReference type="InterPro" id="IPR036919">
    <property type="entry name" value="Ribo_uL30_ferredoxin-like_sf"/>
</dbReference>
<dbReference type="InterPro" id="IPR005996">
    <property type="entry name" value="Ribosomal_uL30_bac-type"/>
</dbReference>
<dbReference type="InterPro" id="IPR016082">
    <property type="entry name" value="Ribosomal_uL30_ferredoxin-like"/>
</dbReference>
<dbReference type="NCBIfam" id="TIGR01308">
    <property type="entry name" value="rpmD_bact"/>
    <property type="match status" value="1"/>
</dbReference>
<dbReference type="PANTHER" id="PTHR15892:SF2">
    <property type="entry name" value="LARGE RIBOSOMAL SUBUNIT PROTEIN UL30M"/>
    <property type="match status" value="1"/>
</dbReference>
<dbReference type="PANTHER" id="PTHR15892">
    <property type="entry name" value="MITOCHONDRIAL RIBOSOMAL PROTEIN L30"/>
    <property type="match status" value="1"/>
</dbReference>
<dbReference type="Pfam" id="PF00327">
    <property type="entry name" value="Ribosomal_L30"/>
    <property type="match status" value="1"/>
</dbReference>
<dbReference type="PIRSF" id="PIRSF002211">
    <property type="entry name" value="Ribosomal_L30_bac-type"/>
    <property type="match status" value="1"/>
</dbReference>
<dbReference type="SUPFAM" id="SSF55129">
    <property type="entry name" value="Ribosomal protein L30p/L7e"/>
    <property type="match status" value="1"/>
</dbReference>
<gene>
    <name evidence="1" type="primary">rpmD</name>
    <name type="ordered locus">Bphyt_3626</name>
</gene>
<organism>
    <name type="scientific">Paraburkholderia phytofirmans (strain DSM 17436 / LMG 22146 / PsJN)</name>
    <name type="common">Burkholderia phytofirmans</name>
    <dbReference type="NCBI Taxonomy" id="398527"/>
    <lineage>
        <taxon>Bacteria</taxon>
        <taxon>Pseudomonadati</taxon>
        <taxon>Pseudomonadota</taxon>
        <taxon>Betaproteobacteria</taxon>
        <taxon>Burkholderiales</taxon>
        <taxon>Burkholderiaceae</taxon>
        <taxon>Paraburkholderia</taxon>
    </lineage>
</organism>
<protein>
    <recommendedName>
        <fullName evidence="1">Large ribosomal subunit protein uL30</fullName>
    </recommendedName>
    <alternativeName>
        <fullName evidence="2">50S ribosomal protein L30</fullName>
    </alternativeName>
</protein>
<keyword id="KW-0687">Ribonucleoprotein</keyword>
<keyword id="KW-0689">Ribosomal protein</keyword>
<sequence>MSDKTVKVQLVKSLIGTRETHRATVRGLGLRRLNSVSELQDTPAVRGMINKVSYLVKVIS</sequence>
<reference key="1">
    <citation type="journal article" date="2011" name="J. Bacteriol.">
        <title>Complete genome sequence of the plant growth-promoting endophyte Burkholderia phytofirmans strain PsJN.</title>
        <authorList>
            <person name="Weilharter A."/>
            <person name="Mitter B."/>
            <person name="Shin M.V."/>
            <person name="Chain P.S."/>
            <person name="Nowak J."/>
            <person name="Sessitsch A."/>
        </authorList>
    </citation>
    <scope>NUCLEOTIDE SEQUENCE [LARGE SCALE GENOMIC DNA]</scope>
    <source>
        <strain>DSM 17436 / LMG 22146 / PsJN</strain>
    </source>
</reference>
<evidence type="ECO:0000255" key="1">
    <source>
        <dbReference type="HAMAP-Rule" id="MF_01371"/>
    </source>
</evidence>
<evidence type="ECO:0000305" key="2"/>
<feature type="chain" id="PRO_1000144659" description="Large ribosomal subunit protein uL30">
    <location>
        <begin position="1"/>
        <end position="60"/>
    </location>
</feature>